<name>COAA_ECO55</name>
<sequence>MSIKEQTLMTPYLQFDRNQWAALRDSVPMTLSEDEIARLKGINEDLSLEEVAEIYLPLSRLLNFYISSNLRRQAVLEQFLGTNGQRIPYIISIAGSVAVGKSTTARVLQALLSRWPEHRRVELITTDGFLHPNQVLKERGLMKKKGFPESYDMHRLVKFVSDLKSGVPNVTAPVYSHLIYDVIPDGDKTVVQPDILILEGLNVLQSGMDYPHDPHHVFVSDFVDFSIYVDAPEDLLQTWYINRFLKFREGAFTDPDSYFHNYAKLTKEEAIKTAMTLWKEINWLNLKQNILPTRERASLILTKSANHAVEEVRLRK</sequence>
<feature type="chain" id="PRO_1000124798" description="Pantothenate kinase">
    <location>
        <begin position="1"/>
        <end position="316"/>
    </location>
</feature>
<feature type="binding site" evidence="1">
    <location>
        <begin position="95"/>
        <end position="102"/>
    </location>
    <ligand>
        <name>ATP</name>
        <dbReference type="ChEBI" id="CHEBI:30616"/>
    </ligand>
</feature>
<proteinExistence type="inferred from homology"/>
<keyword id="KW-0067">ATP-binding</keyword>
<keyword id="KW-0173">Coenzyme A biosynthesis</keyword>
<keyword id="KW-0963">Cytoplasm</keyword>
<keyword id="KW-0418">Kinase</keyword>
<keyword id="KW-0547">Nucleotide-binding</keyword>
<keyword id="KW-1185">Reference proteome</keyword>
<keyword id="KW-0808">Transferase</keyword>
<organism>
    <name type="scientific">Escherichia coli (strain 55989 / EAEC)</name>
    <dbReference type="NCBI Taxonomy" id="585055"/>
    <lineage>
        <taxon>Bacteria</taxon>
        <taxon>Pseudomonadati</taxon>
        <taxon>Pseudomonadota</taxon>
        <taxon>Gammaproteobacteria</taxon>
        <taxon>Enterobacterales</taxon>
        <taxon>Enterobacteriaceae</taxon>
        <taxon>Escherichia</taxon>
    </lineage>
</organism>
<dbReference type="EC" id="2.7.1.33" evidence="1"/>
<dbReference type="EMBL" id="CU928145">
    <property type="protein sequence ID" value="CAV01214.1"/>
    <property type="molecule type" value="Genomic_DNA"/>
</dbReference>
<dbReference type="RefSeq" id="WP_000023081.1">
    <property type="nucleotide sequence ID" value="NZ_CP028304.1"/>
</dbReference>
<dbReference type="SMR" id="B7LA72"/>
<dbReference type="GeneID" id="93777919"/>
<dbReference type="KEGG" id="eck:EC55989_4460"/>
<dbReference type="HOGENOM" id="CLU_053818_1_1_6"/>
<dbReference type="UniPathway" id="UPA00241">
    <property type="reaction ID" value="UER00352"/>
</dbReference>
<dbReference type="Proteomes" id="UP000000746">
    <property type="component" value="Chromosome"/>
</dbReference>
<dbReference type="GO" id="GO:0005737">
    <property type="term" value="C:cytoplasm"/>
    <property type="evidence" value="ECO:0007669"/>
    <property type="project" value="UniProtKB-SubCell"/>
</dbReference>
<dbReference type="GO" id="GO:0005524">
    <property type="term" value="F:ATP binding"/>
    <property type="evidence" value="ECO:0007669"/>
    <property type="project" value="UniProtKB-UniRule"/>
</dbReference>
<dbReference type="GO" id="GO:0004594">
    <property type="term" value="F:pantothenate kinase activity"/>
    <property type="evidence" value="ECO:0007669"/>
    <property type="project" value="UniProtKB-UniRule"/>
</dbReference>
<dbReference type="GO" id="GO:0015937">
    <property type="term" value="P:coenzyme A biosynthetic process"/>
    <property type="evidence" value="ECO:0007669"/>
    <property type="project" value="UniProtKB-UniRule"/>
</dbReference>
<dbReference type="CDD" id="cd02025">
    <property type="entry name" value="PanK"/>
    <property type="match status" value="1"/>
</dbReference>
<dbReference type="FunFam" id="3.40.50.300:FF:000242">
    <property type="entry name" value="Pantothenate kinase"/>
    <property type="match status" value="1"/>
</dbReference>
<dbReference type="Gene3D" id="3.40.50.300">
    <property type="entry name" value="P-loop containing nucleotide triphosphate hydrolases"/>
    <property type="match status" value="1"/>
</dbReference>
<dbReference type="HAMAP" id="MF_00215">
    <property type="entry name" value="Pantothen_kinase_1"/>
    <property type="match status" value="1"/>
</dbReference>
<dbReference type="InterPro" id="IPR027417">
    <property type="entry name" value="P-loop_NTPase"/>
</dbReference>
<dbReference type="InterPro" id="IPR004566">
    <property type="entry name" value="PanK"/>
</dbReference>
<dbReference type="InterPro" id="IPR006083">
    <property type="entry name" value="PRK/URK"/>
</dbReference>
<dbReference type="NCBIfam" id="TIGR00554">
    <property type="entry name" value="panK_bact"/>
    <property type="match status" value="1"/>
</dbReference>
<dbReference type="PANTHER" id="PTHR10285">
    <property type="entry name" value="URIDINE KINASE"/>
    <property type="match status" value="1"/>
</dbReference>
<dbReference type="Pfam" id="PF00485">
    <property type="entry name" value="PRK"/>
    <property type="match status" value="1"/>
</dbReference>
<dbReference type="PIRSF" id="PIRSF000545">
    <property type="entry name" value="Pantothenate_kin"/>
    <property type="match status" value="1"/>
</dbReference>
<dbReference type="SUPFAM" id="SSF52540">
    <property type="entry name" value="P-loop containing nucleoside triphosphate hydrolases"/>
    <property type="match status" value="1"/>
</dbReference>
<comment type="catalytic activity">
    <reaction evidence="1">
        <text>(R)-pantothenate + ATP = (R)-4'-phosphopantothenate + ADP + H(+)</text>
        <dbReference type="Rhea" id="RHEA:16373"/>
        <dbReference type="ChEBI" id="CHEBI:10986"/>
        <dbReference type="ChEBI" id="CHEBI:15378"/>
        <dbReference type="ChEBI" id="CHEBI:29032"/>
        <dbReference type="ChEBI" id="CHEBI:30616"/>
        <dbReference type="ChEBI" id="CHEBI:456216"/>
        <dbReference type="EC" id="2.7.1.33"/>
    </reaction>
</comment>
<comment type="pathway">
    <text evidence="1">Cofactor biosynthesis; coenzyme A biosynthesis; CoA from (R)-pantothenate: step 1/5.</text>
</comment>
<comment type="subcellular location">
    <subcellularLocation>
        <location evidence="1">Cytoplasm</location>
    </subcellularLocation>
</comment>
<comment type="similarity">
    <text evidence="1">Belongs to the prokaryotic pantothenate kinase family.</text>
</comment>
<reference key="1">
    <citation type="journal article" date="2009" name="PLoS Genet.">
        <title>Organised genome dynamics in the Escherichia coli species results in highly diverse adaptive paths.</title>
        <authorList>
            <person name="Touchon M."/>
            <person name="Hoede C."/>
            <person name="Tenaillon O."/>
            <person name="Barbe V."/>
            <person name="Baeriswyl S."/>
            <person name="Bidet P."/>
            <person name="Bingen E."/>
            <person name="Bonacorsi S."/>
            <person name="Bouchier C."/>
            <person name="Bouvet O."/>
            <person name="Calteau A."/>
            <person name="Chiapello H."/>
            <person name="Clermont O."/>
            <person name="Cruveiller S."/>
            <person name="Danchin A."/>
            <person name="Diard M."/>
            <person name="Dossat C."/>
            <person name="Karoui M.E."/>
            <person name="Frapy E."/>
            <person name="Garry L."/>
            <person name="Ghigo J.M."/>
            <person name="Gilles A.M."/>
            <person name="Johnson J."/>
            <person name="Le Bouguenec C."/>
            <person name="Lescat M."/>
            <person name="Mangenot S."/>
            <person name="Martinez-Jehanne V."/>
            <person name="Matic I."/>
            <person name="Nassif X."/>
            <person name="Oztas S."/>
            <person name="Petit M.A."/>
            <person name="Pichon C."/>
            <person name="Rouy Z."/>
            <person name="Ruf C.S."/>
            <person name="Schneider D."/>
            <person name="Tourret J."/>
            <person name="Vacherie B."/>
            <person name="Vallenet D."/>
            <person name="Medigue C."/>
            <person name="Rocha E.P.C."/>
            <person name="Denamur E."/>
        </authorList>
    </citation>
    <scope>NUCLEOTIDE SEQUENCE [LARGE SCALE GENOMIC DNA]</scope>
    <source>
        <strain>55989 / EAEC</strain>
    </source>
</reference>
<accession>B7LA72</accession>
<gene>
    <name evidence="1" type="primary">coaA</name>
    <name type="ordered locus">EC55989_4460</name>
</gene>
<evidence type="ECO:0000255" key="1">
    <source>
        <dbReference type="HAMAP-Rule" id="MF_00215"/>
    </source>
</evidence>
<protein>
    <recommendedName>
        <fullName evidence="1">Pantothenate kinase</fullName>
        <ecNumber evidence="1">2.7.1.33</ecNumber>
    </recommendedName>
    <alternativeName>
        <fullName evidence="1">Pantothenic acid kinase</fullName>
    </alternativeName>
</protein>